<proteinExistence type="inferred from homology"/>
<accession>B1WN93</accession>
<keyword id="KW-0378">Hydrolase</keyword>
<keyword id="KW-0460">Magnesium</keyword>
<keyword id="KW-0479">Metal-binding</keyword>
<keyword id="KW-0546">Nucleotide metabolism</keyword>
<keyword id="KW-1185">Reference proteome</keyword>
<organism>
    <name type="scientific">Crocosphaera subtropica (strain ATCC 51142 / BH68)</name>
    <name type="common">Cyanothece sp. (strain ATCC 51142)</name>
    <dbReference type="NCBI Taxonomy" id="43989"/>
    <lineage>
        <taxon>Bacteria</taxon>
        <taxon>Bacillati</taxon>
        <taxon>Cyanobacteriota</taxon>
        <taxon>Cyanophyceae</taxon>
        <taxon>Oscillatoriophycideae</taxon>
        <taxon>Chroococcales</taxon>
        <taxon>Aphanothecaceae</taxon>
        <taxon>Crocosphaera</taxon>
        <taxon>Crocosphaera subtropica</taxon>
    </lineage>
</organism>
<sequence length="142" mass="15483">MQIKIIKLKEKAIIPKYEHDNDSGLDLVSTETVEIPSGESKLVKTGISIELPPNTEAQIRPRSGLALKHQITVLNTPGTIDEGYRGEIGVILINHGKRSFKVTEGMRIAQMVIAPVIRVKIQEVEQLSDTIRGQGGFGSTGV</sequence>
<gene>
    <name evidence="1" type="primary">dut</name>
    <name type="ordered locus">cce_0384</name>
</gene>
<comment type="function">
    <text evidence="1">This enzyme is involved in nucleotide metabolism: it produces dUMP, the immediate precursor of thymidine nucleotides and it decreases the intracellular concentration of dUTP so that uracil cannot be incorporated into DNA.</text>
</comment>
<comment type="catalytic activity">
    <reaction evidence="1">
        <text>dUTP + H2O = dUMP + diphosphate + H(+)</text>
        <dbReference type="Rhea" id="RHEA:10248"/>
        <dbReference type="ChEBI" id="CHEBI:15377"/>
        <dbReference type="ChEBI" id="CHEBI:15378"/>
        <dbReference type="ChEBI" id="CHEBI:33019"/>
        <dbReference type="ChEBI" id="CHEBI:61555"/>
        <dbReference type="ChEBI" id="CHEBI:246422"/>
        <dbReference type="EC" id="3.6.1.23"/>
    </reaction>
</comment>
<comment type="cofactor">
    <cofactor evidence="1">
        <name>Mg(2+)</name>
        <dbReference type="ChEBI" id="CHEBI:18420"/>
    </cofactor>
</comment>
<comment type="pathway">
    <text evidence="1">Pyrimidine metabolism; dUMP biosynthesis; dUMP from dCTP (dUTP route): step 2/2.</text>
</comment>
<comment type="similarity">
    <text evidence="1">Belongs to the dUTPase family.</text>
</comment>
<name>DUT_CROS5</name>
<evidence type="ECO:0000255" key="1">
    <source>
        <dbReference type="HAMAP-Rule" id="MF_00116"/>
    </source>
</evidence>
<protein>
    <recommendedName>
        <fullName evidence="1">Deoxyuridine 5'-triphosphate nucleotidohydrolase</fullName>
        <shortName evidence="1">dUTPase</shortName>
        <ecNumber evidence="1">3.6.1.23</ecNumber>
    </recommendedName>
    <alternativeName>
        <fullName evidence="1">dUTP pyrophosphatase</fullName>
    </alternativeName>
</protein>
<feature type="chain" id="PRO_1000094956" description="Deoxyuridine 5'-triphosphate nucleotidohydrolase">
    <location>
        <begin position="1"/>
        <end position="142"/>
    </location>
</feature>
<feature type="binding site" evidence="1">
    <location>
        <begin position="62"/>
        <end position="64"/>
    </location>
    <ligand>
        <name>substrate</name>
    </ligand>
</feature>
<feature type="binding site" evidence="1">
    <location>
        <position position="75"/>
    </location>
    <ligand>
        <name>substrate</name>
    </ligand>
</feature>
<feature type="binding site" evidence="1">
    <location>
        <begin position="79"/>
        <end position="81"/>
    </location>
    <ligand>
        <name>substrate</name>
    </ligand>
</feature>
<dbReference type="EC" id="3.6.1.23" evidence="1"/>
<dbReference type="EMBL" id="CP000806">
    <property type="protein sequence ID" value="ACB49735.1"/>
    <property type="molecule type" value="Genomic_DNA"/>
</dbReference>
<dbReference type="RefSeq" id="WP_009546472.1">
    <property type="nucleotide sequence ID" value="NC_010546.1"/>
</dbReference>
<dbReference type="SMR" id="B1WN93"/>
<dbReference type="STRING" id="43989.cce_0384"/>
<dbReference type="KEGG" id="cyt:cce_0384"/>
<dbReference type="eggNOG" id="COG0756">
    <property type="taxonomic scope" value="Bacteria"/>
</dbReference>
<dbReference type="HOGENOM" id="CLU_068508_1_2_3"/>
<dbReference type="OrthoDB" id="9809956at2"/>
<dbReference type="UniPathway" id="UPA00610">
    <property type="reaction ID" value="UER00666"/>
</dbReference>
<dbReference type="Proteomes" id="UP000001203">
    <property type="component" value="Chromosome circular"/>
</dbReference>
<dbReference type="GO" id="GO:0004170">
    <property type="term" value="F:dUTP diphosphatase activity"/>
    <property type="evidence" value="ECO:0007669"/>
    <property type="project" value="UniProtKB-UniRule"/>
</dbReference>
<dbReference type="GO" id="GO:0000287">
    <property type="term" value="F:magnesium ion binding"/>
    <property type="evidence" value="ECO:0007669"/>
    <property type="project" value="UniProtKB-UniRule"/>
</dbReference>
<dbReference type="GO" id="GO:0006226">
    <property type="term" value="P:dUMP biosynthetic process"/>
    <property type="evidence" value="ECO:0007669"/>
    <property type="project" value="UniProtKB-UniRule"/>
</dbReference>
<dbReference type="GO" id="GO:0046081">
    <property type="term" value="P:dUTP catabolic process"/>
    <property type="evidence" value="ECO:0007669"/>
    <property type="project" value="InterPro"/>
</dbReference>
<dbReference type="CDD" id="cd07557">
    <property type="entry name" value="trimeric_dUTPase"/>
    <property type="match status" value="1"/>
</dbReference>
<dbReference type="Gene3D" id="2.70.40.10">
    <property type="match status" value="1"/>
</dbReference>
<dbReference type="HAMAP" id="MF_00116">
    <property type="entry name" value="dUTPase_bact"/>
    <property type="match status" value="1"/>
</dbReference>
<dbReference type="InterPro" id="IPR008181">
    <property type="entry name" value="dUTPase"/>
</dbReference>
<dbReference type="InterPro" id="IPR029054">
    <property type="entry name" value="dUTPase-like"/>
</dbReference>
<dbReference type="InterPro" id="IPR036157">
    <property type="entry name" value="dUTPase-like_sf"/>
</dbReference>
<dbReference type="InterPro" id="IPR033704">
    <property type="entry name" value="dUTPase_trimeric"/>
</dbReference>
<dbReference type="NCBIfam" id="TIGR00576">
    <property type="entry name" value="dut"/>
    <property type="match status" value="1"/>
</dbReference>
<dbReference type="NCBIfam" id="NF001862">
    <property type="entry name" value="PRK00601.1"/>
    <property type="match status" value="1"/>
</dbReference>
<dbReference type="PANTHER" id="PTHR11241">
    <property type="entry name" value="DEOXYURIDINE 5'-TRIPHOSPHATE NUCLEOTIDOHYDROLASE"/>
    <property type="match status" value="1"/>
</dbReference>
<dbReference type="PANTHER" id="PTHR11241:SF0">
    <property type="entry name" value="DEOXYURIDINE 5'-TRIPHOSPHATE NUCLEOTIDOHYDROLASE"/>
    <property type="match status" value="1"/>
</dbReference>
<dbReference type="Pfam" id="PF00692">
    <property type="entry name" value="dUTPase"/>
    <property type="match status" value="1"/>
</dbReference>
<dbReference type="SUPFAM" id="SSF51283">
    <property type="entry name" value="dUTPase-like"/>
    <property type="match status" value="1"/>
</dbReference>
<reference key="1">
    <citation type="journal article" date="2008" name="Proc. Natl. Acad. Sci. U.S.A.">
        <title>The genome of Cyanothece 51142, a unicellular diazotrophic cyanobacterium important in the marine nitrogen cycle.</title>
        <authorList>
            <person name="Welsh E.A."/>
            <person name="Liberton M."/>
            <person name="Stoeckel J."/>
            <person name="Loh T."/>
            <person name="Elvitigala T."/>
            <person name="Wang C."/>
            <person name="Wollam A."/>
            <person name="Fulton R.S."/>
            <person name="Clifton S.W."/>
            <person name="Jacobs J.M."/>
            <person name="Aurora R."/>
            <person name="Ghosh B.K."/>
            <person name="Sherman L.A."/>
            <person name="Smith R.D."/>
            <person name="Wilson R.K."/>
            <person name="Pakrasi H.B."/>
        </authorList>
    </citation>
    <scope>NUCLEOTIDE SEQUENCE [LARGE SCALE GENOMIC DNA]</scope>
    <source>
        <strain>ATCC 51142 / BH68</strain>
    </source>
</reference>